<protein>
    <recommendedName>
        <fullName>Putative HTH-type transcriptional regulator ycf28</fullName>
    </recommendedName>
</protein>
<feature type="chain" id="PRO_0000100190" description="Putative HTH-type transcriptional regulator ycf28">
    <location>
        <begin position="1"/>
        <end position="237"/>
    </location>
</feature>
<feature type="domain" description="HTH crp-type" evidence="1">
    <location>
        <begin position="155"/>
        <end position="228"/>
    </location>
</feature>
<feature type="DNA-binding region" description="H-T-H motif" evidence="1">
    <location>
        <begin position="188"/>
        <end position="207"/>
    </location>
</feature>
<keyword id="KW-0150">Chloroplast</keyword>
<keyword id="KW-0238">DNA-binding</keyword>
<keyword id="KW-0934">Plastid</keyword>
<keyword id="KW-0804">Transcription</keyword>
<keyword id="KW-0805">Transcription regulation</keyword>
<reference key="1">
    <citation type="journal article" date="1995" name="Plant Mol. Biol. Rep.">
        <title>Complete nucleotide sequence of the Porphyra purpurea chloroplast genome.</title>
        <authorList>
            <person name="Reith M.E."/>
            <person name="Munholland J."/>
        </authorList>
    </citation>
    <scope>NUCLEOTIDE SEQUENCE [LARGE SCALE GENOMIC DNA]</scope>
    <source>
        <strain>Avonport</strain>
    </source>
</reference>
<name>YCF28_PORPU</name>
<proteinExistence type="predicted"/>
<geneLocation type="chloroplast"/>
<evidence type="ECO:0000255" key="1">
    <source>
        <dbReference type="PROSITE-ProRule" id="PRU00387"/>
    </source>
</evidence>
<organism>
    <name type="scientific">Porphyra purpurea</name>
    <name type="common">Red seaweed</name>
    <name type="synonym">Ulva purpurea</name>
    <dbReference type="NCBI Taxonomy" id="2787"/>
    <lineage>
        <taxon>Eukaryota</taxon>
        <taxon>Rhodophyta</taxon>
        <taxon>Bangiophyceae</taxon>
        <taxon>Bangiales</taxon>
        <taxon>Bangiaceae</taxon>
        <taxon>Porphyra</taxon>
    </lineage>
</organism>
<accession>P51342</accession>
<sequence length="237" mass="27373">MNNHYLNQGCSFEKVSKNILKKNSHCNPWLSFFNQQDSEHQIFSLKQNDIIIFDVNSKLYIILAGCLIVKKVFRNRKKIILNVLTSEDSFGHTQFASNRFYYEVEALDVAQVLSIEYSIIMNICQNYPNFSVFLVNHLLLCSIKANHFMEIISHKSITNRLISLLLLLSEHNGISQNNGILIDLTITHKVLAQIIGSNRVSITRIISKLIHTKFISMQKKKVIIHDPILLSQRFSNR</sequence>
<comment type="subcellular location">
    <subcellularLocation>
        <location>Plastid</location>
        <location>Chloroplast</location>
    </subcellularLocation>
</comment>
<dbReference type="EMBL" id="U38804">
    <property type="protein sequence ID" value="AAC08228.1"/>
    <property type="molecule type" value="Genomic_DNA"/>
</dbReference>
<dbReference type="PIR" id="S73263">
    <property type="entry name" value="S73263"/>
</dbReference>
<dbReference type="RefSeq" id="NP_053952.1">
    <property type="nucleotide sequence ID" value="NC_000925.1"/>
</dbReference>
<dbReference type="SMR" id="P51342"/>
<dbReference type="GeneID" id="809978"/>
<dbReference type="GO" id="GO:0009507">
    <property type="term" value="C:chloroplast"/>
    <property type="evidence" value="ECO:0007669"/>
    <property type="project" value="UniProtKB-SubCell"/>
</dbReference>
<dbReference type="GO" id="GO:0003677">
    <property type="term" value="F:DNA binding"/>
    <property type="evidence" value="ECO:0007669"/>
    <property type="project" value="UniProtKB-KW"/>
</dbReference>
<dbReference type="GO" id="GO:0003700">
    <property type="term" value="F:DNA-binding transcription factor activity"/>
    <property type="evidence" value="ECO:0007669"/>
    <property type="project" value="InterPro"/>
</dbReference>
<dbReference type="CDD" id="cd00038">
    <property type="entry name" value="CAP_ED"/>
    <property type="match status" value="1"/>
</dbReference>
<dbReference type="CDD" id="cd00092">
    <property type="entry name" value="HTH_CRP"/>
    <property type="match status" value="1"/>
</dbReference>
<dbReference type="Gene3D" id="2.60.120.10">
    <property type="entry name" value="Jelly Rolls"/>
    <property type="match status" value="1"/>
</dbReference>
<dbReference type="Gene3D" id="1.10.10.10">
    <property type="entry name" value="Winged helix-like DNA-binding domain superfamily/Winged helix DNA-binding domain"/>
    <property type="match status" value="1"/>
</dbReference>
<dbReference type="InterPro" id="IPR000595">
    <property type="entry name" value="cNMP-bd_dom"/>
</dbReference>
<dbReference type="InterPro" id="IPR018490">
    <property type="entry name" value="cNMP-bd_dom_sf"/>
</dbReference>
<dbReference type="InterPro" id="IPR012318">
    <property type="entry name" value="HTH_CRP"/>
</dbReference>
<dbReference type="InterPro" id="IPR014710">
    <property type="entry name" value="RmlC-like_jellyroll"/>
</dbReference>
<dbReference type="InterPro" id="IPR018335">
    <property type="entry name" value="Tscrpt_reg_HTH_Crp-type_CS"/>
</dbReference>
<dbReference type="InterPro" id="IPR036388">
    <property type="entry name" value="WH-like_DNA-bd_sf"/>
</dbReference>
<dbReference type="InterPro" id="IPR036390">
    <property type="entry name" value="WH_DNA-bd_sf"/>
</dbReference>
<dbReference type="Pfam" id="PF00027">
    <property type="entry name" value="cNMP_binding"/>
    <property type="match status" value="1"/>
</dbReference>
<dbReference type="Pfam" id="PF13545">
    <property type="entry name" value="HTH_Crp_2"/>
    <property type="match status" value="1"/>
</dbReference>
<dbReference type="SMART" id="SM00100">
    <property type="entry name" value="cNMP"/>
    <property type="match status" value="1"/>
</dbReference>
<dbReference type="SMART" id="SM00419">
    <property type="entry name" value="HTH_CRP"/>
    <property type="match status" value="1"/>
</dbReference>
<dbReference type="SUPFAM" id="SSF51206">
    <property type="entry name" value="cAMP-binding domain-like"/>
    <property type="match status" value="1"/>
</dbReference>
<dbReference type="SUPFAM" id="SSF46785">
    <property type="entry name" value="Winged helix' DNA-binding domain"/>
    <property type="match status" value="1"/>
</dbReference>
<dbReference type="PROSITE" id="PS00042">
    <property type="entry name" value="HTH_CRP_1"/>
    <property type="match status" value="1"/>
</dbReference>
<dbReference type="PROSITE" id="PS51063">
    <property type="entry name" value="HTH_CRP_2"/>
    <property type="match status" value="1"/>
</dbReference>
<gene>
    <name type="primary">ycf28</name>
</gene>